<reference key="1">
    <citation type="journal article" date="1993" name="Antonie Van Leeuwenhoek">
        <title>Phylogenetic relationships of Bacteria based on comparative sequence analysis of elongation factor Tu and ATP-synthase beta-subunit genes.</title>
        <authorList>
            <person name="Ludwig W."/>
            <person name="Neumaier J."/>
            <person name="Klugbauer N."/>
            <person name="Brockmann E."/>
            <person name="Roller C."/>
            <person name="Klugbauer S."/>
            <person name="Reetz K."/>
            <person name="Schachtner I."/>
            <person name="Ludvigsen A."/>
            <person name="Bachleitner M."/>
            <person name="Fischer U."/>
            <person name="Schleifer K.H."/>
        </authorList>
    </citation>
    <scope>NUCLEOTIDE SEQUENCE [GENOMIC DNA]</scope>
    <source>
        <strain>ATCC 29543 / DSM 1740 / CCUG 13145 / JCM 31913 / LMG 7466 / NCTC 11488 / FDC 602W</strain>
    </source>
</reference>
<reference key="2">
    <citation type="journal article" date="2003" name="Proc. Natl. Acad. Sci. U.S.A.">
        <title>Complete genome sequence and analysis of Wolinella succinogenes.</title>
        <authorList>
            <person name="Baar C."/>
            <person name="Eppinger M."/>
            <person name="Raddatz G."/>
            <person name="Simon J."/>
            <person name="Lanz C."/>
            <person name="Klimmek O."/>
            <person name="Nandakumar R."/>
            <person name="Gross R."/>
            <person name="Rosinus A."/>
            <person name="Keller H."/>
            <person name="Jagtap P."/>
            <person name="Linke B."/>
            <person name="Meyer F."/>
            <person name="Lederer H."/>
            <person name="Schuster S.C."/>
        </authorList>
    </citation>
    <scope>NUCLEOTIDE SEQUENCE [LARGE SCALE GENOMIC DNA]</scope>
    <source>
        <strain>ATCC 29543 / DSM 1740 / CCUG 13145 / JCM 31913 / LMG 7466 / NCTC 11488 / FDC 602W</strain>
    </source>
</reference>
<dbReference type="EC" id="3.6.5.3" evidence="2"/>
<dbReference type="EMBL" id="X76872">
    <property type="protein sequence ID" value="CAA54199.1"/>
    <property type="molecule type" value="Genomic_DNA"/>
</dbReference>
<dbReference type="EMBL" id="BX571658">
    <property type="status" value="NOT_ANNOTATED_CDS"/>
    <property type="molecule type" value="Genomic_DNA"/>
</dbReference>
<dbReference type="RefSeq" id="WP_041571700.1">
    <property type="nucleotide sequence ID" value="NC_005090.1"/>
</dbReference>
<dbReference type="SMR" id="P42482"/>
<dbReference type="Proteomes" id="UP000000422">
    <property type="component" value="Chromosome"/>
</dbReference>
<dbReference type="GO" id="GO:0005829">
    <property type="term" value="C:cytosol"/>
    <property type="evidence" value="ECO:0007669"/>
    <property type="project" value="TreeGrafter"/>
</dbReference>
<dbReference type="GO" id="GO:0005525">
    <property type="term" value="F:GTP binding"/>
    <property type="evidence" value="ECO:0007669"/>
    <property type="project" value="UniProtKB-UniRule"/>
</dbReference>
<dbReference type="GO" id="GO:0003924">
    <property type="term" value="F:GTPase activity"/>
    <property type="evidence" value="ECO:0007669"/>
    <property type="project" value="InterPro"/>
</dbReference>
<dbReference type="GO" id="GO:0003746">
    <property type="term" value="F:translation elongation factor activity"/>
    <property type="evidence" value="ECO:0007669"/>
    <property type="project" value="UniProtKB-UniRule"/>
</dbReference>
<dbReference type="CDD" id="cd01884">
    <property type="entry name" value="EF_Tu"/>
    <property type="match status" value="1"/>
</dbReference>
<dbReference type="CDD" id="cd03697">
    <property type="entry name" value="EFTU_II"/>
    <property type="match status" value="1"/>
</dbReference>
<dbReference type="CDD" id="cd03707">
    <property type="entry name" value="EFTU_III"/>
    <property type="match status" value="1"/>
</dbReference>
<dbReference type="FunFam" id="2.40.30.10:FF:000001">
    <property type="entry name" value="Elongation factor Tu"/>
    <property type="match status" value="1"/>
</dbReference>
<dbReference type="FunFam" id="3.40.50.300:FF:000003">
    <property type="entry name" value="Elongation factor Tu"/>
    <property type="match status" value="1"/>
</dbReference>
<dbReference type="Gene3D" id="3.40.50.300">
    <property type="entry name" value="P-loop containing nucleotide triphosphate hydrolases"/>
    <property type="match status" value="1"/>
</dbReference>
<dbReference type="Gene3D" id="2.40.30.10">
    <property type="entry name" value="Translation factors"/>
    <property type="match status" value="2"/>
</dbReference>
<dbReference type="HAMAP" id="MF_00118_B">
    <property type="entry name" value="EF_Tu_B"/>
    <property type="match status" value="1"/>
</dbReference>
<dbReference type="InterPro" id="IPR041709">
    <property type="entry name" value="EF-Tu_GTP-bd"/>
</dbReference>
<dbReference type="InterPro" id="IPR050055">
    <property type="entry name" value="EF-Tu_GTPase"/>
</dbReference>
<dbReference type="InterPro" id="IPR004161">
    <property type="entry name" value="EFTu-like_2"/>
</dbReference>
<dbReference type="InterPro" id="IPR033720">
    <property type="entry name" value="EFTU_2"/>
</dbReference>
<dbReference type="InterPro" id="IPR031157">
    <property type="entry name" value="G_TR_CS"/>
</dbReference>
<dbReference type="InterPro" id="IPR027417">
    <property type="entry name" value="P-loop_NTPase"/>
</dbReference>
<dbReference type="InterPro" id="IPR005225">
    <property type="entry name" value="Small_GTP-bd"/>
</dbReference>
<dbReference type="InterPro" id="IPR000795">
    <property type="entry name" value="T_Tr_GTP-bd_dom"/>
</dbReference>
<dbReference type="InterPro" id="IPR009000">
    <property type="entry name" value="Transl_B-barrel_sf"/>
</dbReference>
<dbReference type="InterPro" id="IPR009001">
    <property type="entry name" value="Transl_elong_EF1A/Init_IF2_C"/>
</dbReference>
<dbReference type="InterPro" id="IPR004541">
    <property type="entry name" value="Transl_elong_EFTu/EF1A_bac/org"/>
</dbReference>
<dbReference type="InterPro" id="IPR004160">
    <property type="entry name" value="Transl_elong_EFTu/EF1A_C"/>
</dbReference>
<dbReference type="NCBIfam" id="TIGR00485">
    <property type="entry name" value="EF-Tu"/>
    <property type="match status" value="1"/>
</dbReference>
<dbReference type="NCBIfam" id="NF000766">
    <property type="entry name" value="PRK00049.1"/>
    <property type="match status" value="1"/>
</dbReference>
<dbReference type="NCBIfam" id="NF009372">
    <property type="entry name" value="PRK12735.1"/>
    <property type="match status" value="1"/>
</dbReference>
<dbReference type="NCBIfam" id="NF009373">
    <property type="entry name" value="PRK12736.1"/>
    <property type="match status" value="1"/>
</dbReference>
<dbReference type="NCBIfam" id="TIGR00231">
    <property type="entry name" value="small_GTP"/>
    <property type="match status" value="1"/>
</dbReference>
<dbReference type="PANTHER" id="PTHR43721:SF22">
    <property type="entry name" value="ELONGATION FACTOR TU, MITOCHONDRIAL"/>
    <property type="match status" value="1"/>
</dbReference>
<dbReference type="PANTHER" id="PTHR43721">
    <property type="entry name" value="ELONGATION FACTOR TU-RELATED"/>
    <property type="match status" value="1"/>
</dbReference>
<dbReference type="Pfam" id="PF00009">
    <property type="entry name" value="GTP_EFTU"/>
    <property type="match status" value="1"/>
</dbReference>
<dbReference type="Pfam" id="PF03144">
    <property type="entry name" value="GTP_EFTU_D2"/>
    <property type="match status" value="1"/>
</dbReference>
<dbReference type="Pfam" id="PF03143">
    <property type="entry name" value="GTP_EFTU_D3"/>
    <property type="match status" value="1"/>
</dbReference>
<dbReference type="PRINTS" id="PR00315">
    <property type="entry name" value="ELONGATNFCT"/>
</dbReference>
<dbReference type="SUPFAM" id="SSF50465">
    <property type="entry name" value="EF-Tu/eEF-1alpha/eIF2-gamma C-terminal domain"/>
    <property type="match status" value="1"/>
</dbReference>
<dbReference type="SUPFAM" id="SSF52540">
    <property type="entry name" value="P-loop containing nucleoside triphosphate hydrolases"/>
    <property type="match status" value="1"/>
</dbReference>
<dbReference type="SUPFAM" id="SSF50447">
    <property type="entry name" value="Translation proteins"/>
    <property type="match status" value="1"/>
</dbReference>
<dbReference type="PROSITE" id="PS00301">
    <property type="entry name" value="G_TR_1"/>
    <property type="match status" value="1"/>
</dbReference>
<dbReference type="PROSITE" id="PS51722">
    <property type="entry name" value="G_TR_2"/>
    <property type="match status" value="1"/>
</dbReference>
<feature type="chain" id="PRO_0000091437" description="Elongation factor Tu">
    <location>
        <begin position="1"/>
        <end position="399"/>
    </location>
</feature>
<feature type="domain" description="tr-type G">
    <location>
        <begin position="10"/>
        <end position="209"/>
    </location>
</feature>
<feature type="region of interest" description="G1" evidence="1">
    <location>
        <begin position="19"/>
        <end position="26"/>
    </location>
</feature>
<feature type="region of interest" description="G2" evidence="1">
    <location>
        <begin position="60"/>
        <end position="64"/>
    </location>
</feature>
<feature type="region of interest" description="G3" evidence="1">
    <location>
        <begin position="81"/>
        <end position="84"/>
    </location>
</feature>
<feature type="region of interest" description="G4" evidence="1">
    <location>
        <begin position="136"/>
        <end position="139"/>
    </location>
</feature>
<feature type="region of interest" description="G5" evidence="1">
    <location>
        <begin position="174"/>
        <end position="176"/>
    </location>
</feature>
<feature type="binding site" evidence="2">
    <location>
        <begin position="19"/>
        <end position="26"/>
    </location>
    <ligand>
        <name>GTP</name>
        <dbReference type="ChEBI" id="CHEBI:37565"/>
    </ligand>
</feature>
<feature type="binding site" evidence="2">
    <location>
        <position position="26"/>
    </location>
    <ligand>
        <name>Mg(2+)</name>
        <dbReference type="ChEBI" id="CHEBI:18420"/>
    </ligand>
</feature>
<feature type="binding site" evidence="2">
    <location>
        <begin position="81"/>
        <end position="85"/>
    </location>
    <ligand>
        <name>GTP</name>
        <dbReference type="ChEBI" id="CHEBI:37565"/>
    </ligand>
</feature>
<feature type="binding site" evidence="2">
    <location>
        <begin position="136"/>
        <end position="139"/>
    </location>
    <ligand>
        <name>GTP</name>
        <dbReference type="ChEBI" id="CHEBI:37565"/>
    </ligand>
</feature>
<feature type="sequence conflict" description="In Ref. 1; CAA54199." evidence="3" ref="1">
    <original>E</original>
    <variation>K</variation>
    <location>
        <position position="4"/>
    </location>
</feature>
<feature type="sequence conflict" description="In Ref. 1; CAA54199." evidence="3" ref="1">
    <original>N</original>
    <variation>Y</variation>
    <location>
        <position position="9"/>
    </location>
</feature>
<feature type="sequence conflict" description="In Ref. 1; CAA54199." evidence="3" ref="1">
    <original>KTG</original>
    <variation>NDQE</variation>
    <location>
        <begin position="183"/>
        <end position="185"/>
    </location>
</feature>
<evidence type="ECO:0000250" key="1"/>
<evidence type="ECO:0000255" key="2">
    <source>
        <dbReference type="HAMAP-Rule" id="MF_00118"/>
    </source>
</evidence>
<evidence type="ECO:0000305" key="3"/>
<proteinExistence type="inferred from homology"/>
<sequence>MAKEKFVKNKPHVNIGTIGHVDHGKTTLSAAISAVLATKGLCELKDYDAIDNAPEERERGITIATSHIEYETENRHYAHVDCPGHADYVKNMITGAAQMDGAILVVSAADGPMPQTREHILLSRQVGVPYIVVFLNKEDMVDDAELLELVEMEVRELLSNYDFPGDDTPIVAGSALKALEEAKTGNVGEWGEKVLKLMAEVDRYIPTPERDVDKPFLMPVEDVFSIAGRGTVVTGRIERGVVKVGDEVEIVGIRNTQKTTVTGVEMFRKELDKGEAGDNVGVLLRGTKKEDVERGMVLCKIGSITPHTNFEGEVYVLSKEEGGRHTPFFNGYRPQFYVRTTDVTGSISLPEGVEMVMPGDNVKINVELIAPVALEEGTRFAIREGGRTVGAGVVTKITK</sequence>
<protein>
    <recommendedName>
        <fullName evidence="2">Elongation factor Tu</fullName>
        <shortName evidence="2">EF-Tu</shortName>
        <ecNumber evidence="2">3.6.5.3</ecNumber>
    </recommendedName>
</protein>
<keyword id="KW-0963">Cytoplasm</keyword>
<keyword id="KW-0251">Elongation factor</keyword>
<keyword id="KW-0342">GTP-binding</keyword>
<keyword id="KW-0378">Hydrolase</keyword>
<keyword id="KW-0460">Magnesium</keyword>
<keyword id="KW-0479">Metal-binding</keyword>
<keyword id="KW-0547">Nucleotide-binding</keyword>
<keyword id="KW-0648">Protein biosynthesis</keyword>
<keyword id="KW-1185">Reference proteome</keyword>
<comment type="function">
    <text evidence="2">GTP hydrolase that promotes the GTP-dependent binding of aminoacyl-tRNA to the A-site of ribosomes during protein biosynthesis.</text>
</comment>
<comment type="catalytic activity">
    <reaction evidence="2">
        <text>GTP + H2O = GDP + phosphate + H(+)</text>
        <dbReference type="Rhea" id="RHEA:19669"/>
        <dbReference type="ChEBI" id="CHEBI:15377"/>
        <dbReference type="ChEBI" id="CHEBI:15378"/>
        <dbReference type="ChEBI" id="CHEBI:37565"/>
        <dbReference type="ChEBI" id="CHEBI:43474"/>
        <dbReference type="ChEBI" id="CHEBI:58189"/>
        <dbReference type="EC" id="3.6.5.3"/>
    </reaction>
    <physiologicalReaction direction="left-to-right" evidence="2">
        <dbReference type="Rhea" id="RHEA:19670"/>
    </physiologicalReaction>
</comment>
<comment type="subunit">
    <text evidence="2">Monomer.</text>
</comment>
<comment type="subcellular location">
    <subcellularLocation>
        <location evidence="2">Cytoplasm</location>
    </subcellularLocation>
</comment>
<comment type="similarity">
    <text evidence="2">Belongs to the TRAFAC class translation factor GTPase superfamily. Classic translation factor GTPase family. EF-Tu/EF-1A subfamily.</text>
</comment>
<accession>P42482</accession>
<organism>
    <name type="scientific">Wolinella succinogenes (strain ATCC 29543 / DSM 1740 / CCUG 13145 / JCM 31913 / LMG 7466 / NCTC 11488 / FDC 602W)</name>
    <name type="common">Vibrio succinogenes</name>
    <dbReference type="NCBI Taxonomy" id="273121"/>
    <lineage>
        <taxon>Bacteria</taxon>
        <taxon>Pseudomonadati</taxon>
        <taxon>Campylobacterota</taxon>
        <taxon>Epsilonproteobacteria</taxon>
        <taxon>Campylobacterales</taxon>
        <taxon>Helicobacteraceae</taxon>
        <taxon>Wolinella</taxon>
    </lineage>
</organism>
<name>EFTU_WOLSU</name>
<gene>
    <name evidence="2" type="primary">tuf</name>
    <name type="ordered locus">WS0460</name>
</gene>